<comment type="function">
    <text evidence="1">Involved in the maturation of [NiFe] hydrogenases. Required for nickel insertion into the metal center of the hydrogenase. Exhibits a low intrinsic GTPase activity, which is essential for nickel insertion.</text>
</comment>
<comment type="similarity">
    <text evidence="3">Belongs to the SIMIBI class G3E GTPase family. HypB/HupM subfamily.</text>
</comment>
<gene>
    <name type="primary">hypB</name>
</gene>
<name>HYPB_AZOVI</name>
<proteinExistence type="inferred from homology"/>
<evidence type="ECO:0000250" key="1">
    <source>
        <dbReference type="UniProtKB" id="P0AAN3"/>
    </source>
</evidence>
<evidence type="ECO:0000256" key="2">
    <source>
        <dbReference type="SAM" id="MobiDB-lite"/>
    </source>
</evidence>
<evidence type="ECO:0000305" key="3"/>
<sequence>MCTVCGCAEGETRIEGEHHHHGHDHHHHEHPFVRRPAPAEAAPPAAGGPNLHFGQGPARAHAPGLSQSRMLRIEQDILGKNDRYAAENRARFEALSLFVLNLVSSPGSGKTSLLTRTIELLGRRRPLAVIEGDQQTDHDAARIRATGVPAVQINTGKGCHLDAHMVGHALARLDDLEGGLLFIENVGNLVCPAAFDLGEAHKVAILSVTEGEDKPLKYPDMFHAADLMLLNKTDLLPHLDFDVEACIAYARRVNPDIEVIRVSARSGEGMGEWLAWIERQRGTRLRARIDALREQARALEALL</sequence>
<protein>
    <recommendedName>
        <fullName evidence="1">Hydrogenase maturation factor HypB</fullName>
    </recommendedName>
</protein>
<keyword id="KW-0342">GTP-binding</keyword>
<keyword id="KW-0378">Hydrolase</keyword>
<keyword id="KW-0479">Metal-binding</keyword>
<keyword id="KW-0533">Nickel</keyword>
<keyword id="KW-0547">Nucleotide-binding</keyword>
<keyword id="KW-0862">Zinc</keyword>
<organism>
    <name type="scientific">Azotobacter vinelandii</name>
    <dbReference type="NCBI Taxonomy" id="354"/>
    <lineage>
        <taxon>Bacteria</taxon>
        <taxon>Pseudomonadati</taxon>
        <taxon>Pseudomonadota</taxon>
        <taxon>Gammaproteobacteria</taxon>
        <taxon>Pseudomonadales</taxon>
        <taxon>Pseudomonadaceae</taxon>
        <taxon>Azotobacter</taxon>
    </lineage>
</organism>
<feature type="chain" id="PRO_0000201436" description="Hydrogenase maturation factor HypB">
    <location>
        <begin position="1"/>
        <end position="303"/>
    </location>
</feature>
<feature type="region of interest" description="Disordered" evidence="2">
    <location>
        <begin position="18"/>
        <end position="63"/>
    </location>
</feature>
<feature type="region of interest" description="G-domain" evidence="1">
    <location>
        <begin position="99"/>
        <end position="260"/>
    </location>
</feature>
<feature type="compositionally biased region" description="Basic residues" evidence="2">
    <location>
        <begin position="19"/>
        <end position="29"/>
    </location>
</feature>
<feature type="compositionally biased region" description="Low complexity" evidence="2">
    <location>
        <begin position="36"/>
        <end position="49"/>
    </location>
</feature>
<feature type="binding site" evidence="1">
    <location>
        <position position="2"/>
    </location>
    <ligand>
        <name>Ni(2+)</name>
        <dbReference type="ChEBI" id="CHEBI:49786"/>
        <label>1</label>
    </ligand>
</feature>
<feature type="binding site" evidence="1">
    <location>
        <position position="5"/>
    </location>
    <ligand>
        <name>Ni(2+)</name>
        <dbReference type="ChEBI" id="CHEBI:49786"/>
        <label>1</label>
    </ligand>
</feature>
<feature type="binding site" evidence="1">
    <location>
        <position position="7"/>
    </location>
    <ligand>
        <name>Ni(2+)</name>
        <dbReference type="ChEBI" id="CHEBI:49786"/>
        <label>1</label>
    </ligand>
</feature>
<feature type="binding site" evidence="1">
    <location>
        <position position="159"/>
    </location>
    <ligand>
        <name>Ni(2+)</name>
        <dbReference type="ChEBI" id="CHEBI:49786"/>
        <label>2</label>
    </ligand>
</feature>
<feature type="binding site" evidence="1">
    <location>
        <position position="159"/>
    </location>
    <ligand>
        <name>Zn(2+)</name>
        <dbReference type="ChEBI" id="CHEBI:29105"/>
    </ligand>
</feature>
<feature type="binding site" evidence="1">
    <location>
        <position position="160"/>
    </location>
    <ligand>
        <name>Ni(2+)</name>
        <dbReference type="ChEBI" id="CHEBI:49786"/>
        <label>2</label>
    </ligand>
</feature>
<feature type="binding site" evidence="1">
    <location>
        <position position="160"/>
    </location>
    <ligand>
        <name>Zn(2+)</name>
        <dbReference type="ChEBI" id="CHEBI:29105"/>
    </ligand>
</feature>
<feature type="binding site" evidence="1">
    <location>
        <position position="191"/>
    </location>
    <ligand>
        <name>Ni(2+)</name>
        <dbReference type="ChEBI" id="CHEBI:49786"/>
        <label>2</label>
    </ligand>
</feature>
<feature type="binding site" evidence="1">
    <location>
        <position position="191"/>
    </location>
    <ligand>
        <name>Zn(2+)</name>
        <dbReference type="ChEBI" id="CHEBI:29105"/>
    </ligand>
</feature>
<accession>P31880</accession>
<reference key="1">
    <citation type="journal article" date="1992" name="Biochim. Biophys. Acta">
        <title>Identification of six open reading frames from a region of the Azotobacter vinelandii genome likely involved in dihydrogen metabolism.</title>
        <authorList>
            <person name="Chen J.C."/>
            <person name="Mortenson L.E."/>
        </authorList>
    </citation>
    <scope>NUCLEOTIDE SEQUENCE [GENOMIC DNA]</scope>
    <source>
        <strain>ATCC 13705 / OP1 / DSM 366 / NCIMB 11614 / LMG 3878 / UW</strain>
    </source>
</reference>
<dbReference type="EMBL" id="X63650">
    <property type="protein sequence ID" value="CAA45184.1"/>
    <property type="molecule type" value="Genomic_DNA"/>
</dbReference>
<dbReference type="EMBL" id="L23970">
    <property type="protein sequence ID" value="AAA19509.1"/>
    <property type="molecule type" value="Unassigned_DNA"/>
</dbReference>
<dbReference type="PIR" id="S23440">
    <property type="entry name" value="S23440"/>
</dbReference>
<dbReference type="RefSeq" id="WP_012703489.1">
    <property type="nucleotide sequence ID" value="NZ_FPKM01000029.1"/>
</dbReference>
<dbReference type="SMR" id="P31880"/>
<dbReference type="GeneID" id="88187884"/>
<dbReference type="OMA" id="GRSCHLD"/>
<dbReference type="GO" id="GO:0005525">
    <property type="term" value="F:GTP binding"/>
    <property type="evidence" value="ECO:0007669"/>
    <property type="project" value="UniProtKB-KW"/>
</dbReference>
<dbReference type="GO" id="GO:0003924">
    <property type="term" value="F:GTPase activity"/>
    <property type="evidence" value="ECO:0007669"/>
    <property type="project" value="InterPro"/>
</dbReference>
<dbReference type="GO" id="GO:0016151">
    <property type="term" value="F:nickel cation binding"/>
    <property type="evidence" value="ECO:0007669"/>
    <property type="project" value="InterPro"/>
</dbReference>
<dbReference type="GO" id="GO:0008270">
    <property type="term" value="F:zinc ion binding"/>
    <property type="evidence" value="ECO:0007669"/>
    <property type="project" value="TreeGrafter"/>
</dbReference>
<dbReference type="GO" id="GO:0051604">
    <property type="term" value="P:protein maturation"/>
    <property type="evidence" value="ECO:0007669"/>
    <property type="project" value="InterPro"/>
</dbReference>
<dbReference type="CDD" id="cd05390">
    <property type="entry name" value="HypB"/>
    <property type="match status" value="1"/>
</dbReference>
<dbReference type="Gene3D" id="3.40.50.300">
    <property type="entry name" value="P-loop containing nucleotide triphosphate hydrolases"/>
    <property type="match status" value="1"/>
</dbReference>
<dbReference type="InterPro" id="IPR003495">
    <property type="entry name" value="CobW/HypB/UreG_nucleotide-bd"/>
</dbReference>
<dbReference type="InterPro" id="IPR004392">
    <property type="entry name" value="Hyd_mat_HypB"/>
</dbReference>
<dbReference type="InterPro" id="IPR027417">
    <property type="entry name" value="P-loop_NTPase"/>
</dbReference>
<dbReference type="NCBIfam" id="TIGR00073">
    <property type="entry name" value="hypB"/>
    <property type="match status" value="1"/>
</dbReference>
<dbReference type="NCBIfam" id="NF007775">
    <property type="entry name" value="PRK10463.1"/>
    <property type="match status" value="1"/>
</dbReference>
<dbReference type="PANTHER" id="PTHR30134:SF2">
    <property type="entry name" value="HYDROGENASE MATURATION FACTOR HYPB"/>
    <property type="match status" value="1"/>
</dbReference>
<dbReference type="PANTHER" id="PTHR30134">
    <property type="entry name" value="HYDROGENASE PROTEIN ASSEMBLY PROTEIN, NICKEL CHAPERONE"/>
    <property type="match status" value="1"/>
</dbReference>
<dbReference type="Pfam" id="PF02492">
    <property type="entry name" value="cobW"/>
    <property type="match status" value="1"/>
</dbReference>
<dbReference type="SUPFAM" id="SSF52540">
    <property type="entry name" value="P-loop containing nucleoside triphosphate hydrolases"/>
    <property type="match status" value="1"/>
</dbReference>